<accession>B4TQU0</accession>
<gene>
    <name evidence="1" type="primary">bioF</name>
    <name type="ordered locus">SeSA_A0945</name>
</gene>
<sequence length="385" mass="41954">MSWQQRVDDALTARRATDTLRRRYVVSQGAGRWLVANGRQYLNFSSNDYLGLSQHPQIIRAWQQAAMRFGVGSGGSGHISGYSVAHQALEEELAQWLGYPRALLFISGFAANQAVITALMKKNDRIVADRLSHASLLEAANLSPAQLRRFIHNDTQHLSRLLQSPCVGQQLVVTEGVYSMDGDSAPLAEIQHIARRHHAWLLVDDAHGIGVTGDEGRGTCWQRGVKPELLVVTFGKGFGVSGAAVLCSESVADYLLQFARHLVYSTSMPPAQAQALSASLAVIRSDEGGERREKLAALVQRFRAGVNASRFTLLNAHSAIQPLIVGDNSHALRLAEALRQQGCWATAIRPPTVPVGTARLRLTLTQAHEACDIDRLLEVLHGAGE</sequence>
<evidence type="ECO:0000255" key="1">
    <source>
        <dbReference type="HAMAP-Rule" id="MF_01693"/>
    </source>
</evidence>
<comment type="function">
    <text evidence="1">Catalyzes the decarboxylative condensation of pimeloyl-[acyl-carrier protein] and L-alanine to produce 8-amino-7-oxononanoate (AON), [acyl-carrier protein], and carbon dioxide.</text>
</comment>
<comment type="catalytic activity">
    <reaction evidence="1">
        <text>6-carboxyhexanoyl-[ACP] + L-alanine + H(+) = (8S)-8-amino-7-oxononanoate + holo-[ACP] + CO2</text>
        <dbReference type="Rhea" id="RHEA:42288"/>
        <dbReference type="Rhea" id="RHEA-COMP:9685"/>
        <dbReference type="Rhea" id="RHEA-COMP:9955"/>
        <dbReference type="ChEBI" id="CHEBI:15378"/>
        <dbReference type="ChEBI" id="CHEBI:16526"/>
        <dbReference type="ChEBI" id="CHEBI:57972"/>
        <dbReference type="ChEBI" id="CHEBI:64479"/>
        <dbReference type="ChEBI" id="CHEBI:78846"/>
        <dbReference type="ChEBI" id="CHEBI:149468"/>
        <dbReference type="EC" id="2.3.1.47"/>
    </reaction>
</comment>
<comment type="cofactor">
    <cofactor evidence="1">
        <name>pyridoxal 5'-phosphate</name>
        <dbReference type="ChEBI" id="CHEBI:597326"/>
    </cofactor>
</comment>
<comment type="pathway">
    <text evidence="1">Cofactor biosynthesis; biotin biosynthesis.</text>
</comment>
<comment type="subunit">
    <text evidence="1">Homodimer.</text>
</comment>
<comment type="similarity">
    <text evidence="1">Belongs to the class-II pyridoxal-phosphate-dependent aminotransferase family. BioF subfamily.</text>
</comment>
<organism>
    <name type="scientific">Salmonella schwarzengrund (strain CVM19633)</name>
    <dbReference type="NCBI Taxonomy" id="439843"/>
    <lineage>
        <taxon>Bacteria</taxon>
        <taxon>Pseudomonadati</taxon>
        <taxon>Pseudomonadota</taxon>
        <taxon>Gammaproteobacteria</taxon>
        <taxon>Enterobacterales</taxon>
        <taxon>Enterobacteriaceae</taxon>
        <taxon>Salmonella</taxon>
    </lineage>
</organism>
<proteinExistence type="inferred from homology"/>
<name>BIOF_SALSV</name>
<dbReference type="EC" id="2.3.1.47" evidence="1"/>
<dbReference type="EMBL" id="CP001127">
    <property type="protein sequence ID" value="ACF89710.1"/>
    <property type="molecule type" value="Genomic_DNA"/>
</dbReference>
<dbReference type="RefSeq" id="WP_000118933.1">
    <property type="nucleotide sequence ID" value="NC_011094.1"/>
</dbReference>
<dbReference type="SMR" id="B4TQU0"/>
<dbReference type="KEGG" id="sew:SeSA_A0945"/>
<dbReference type="HOGENOM" id="CLU_015846_11_2_6"/>
<dbReference type="UniPathway" id="UPA00078"/>
<dbReference type="Proteomes" id="UP000001865">
    <property type="component" value="Chromosome"/>
</dbReference>
<dbReference type="GO" id="GO:0008710">
    <property type="term" value="F:8-amino-7-oxononanoate synthase activity"/>
    <property type="evidence" value="ECO:0007669"/>
    <property type="project" value="UniProtKB-UniRule"/>
</dbReference>
<dbReference type="GO" id="GO:0030170">
    <property type="term" value="F:pyridoxal phosphate binding"/>
    <property type="evidence" value="ECO:0007669"/>
    <property type="project" value="UniProtKB-UniRule"/>
</dbReference>
<dbReference type="GO" id="GO:0009102">
    <property type="term" value="P:biotin biosynthetic process"/>
    <property type="evidence" value="ECO:0007669"/>
    <property type="project" value="UniProtKB-UniRule"/>
</dbReference>
<dbReference type="CDD" id="cd06454">
    <property type="entry name" value="KBL_like"/>
    <property type="match status" value="1"/>
</dbReference>
<dbReference type="FunFam" id="3.40.640.10:FF:000095">
    <property type="entry name" value="8-amino-7-oxononanoate synthase"/>
    <property type="match status" value="1"/>
</dbReference>
<dbReference type="Gene3D" id="3.90.1150.10">
    <property type="entry name" value="Aspartate Aminotransferase, domain 1"/>
    <property type="match status" value="1"/>
</dbReference>
<dbReference type="Gene3D" id="3.40.640.10">
    <property type="entry name" value="Type I PLP-dependent aspartate aminotransferase-like (Major domain)"/>
    <property type="match status" value="1"/>
</dbReference>
<dbReference type="HAMAP" id="MF_01693">
    <property type="entry name" value="BioF_aminotrans_2"/>
    <property type="match status" value="1"/>
</dbReference>
<dbReference type="InterPro" id="IPR001917">
    <property type="entry name" value="Aminotrans_II_pyridoxalP_BS"/>
</dbReference>
<dbReference type="InterPro" id="IPR004839">
    <property type="entry name" value="Aminotransferase_I/II_large"/>
</dbReference>
<dbReference type="InterPro" id="IPR050087">
    <property type="entry name" value="AON_synthase_class-II"/>
</dbReference>
<dbReference type="InterPro" id="IPR004723">
    <property type="entry name" value="AONS_Archaea/Proteobacteria"/>
</dbReference>
<dbReference type="InterPro" id="IPR022834">
    <property type="entry name" value="AONS_Proteobacteria"/>
</dbReference>
<dbReference type="InterPro" id="IPR015424">
    <property type="entry name" value="PyrdxlP-dep_Trfase"/>
</dbReference>
<dbReference type="InterPro" id="IPR015421">
    <property type="entry name" value="PyrdxlP-dep_Trfase_major"/>
</dbReference>
<dbReference type="InterPro" id="IPR015422">
    <property type="entry name" value="PyrdxlP-dep_Trfase_small"/>
</dbReference>
<dbReference type="NCBIfam" id="TIGR00858">
    <property type="entry name" value="bioF"/>
    <property type="match status" value="1"/>
</dbReference>
<dbReference type="PANTHER" id="PTHR13693:SF100">
    <property type="entry name" value="8-AMINO-7-OXONONANOATE SYNTHASE"/>
    <property type="match status" value="1"/>
</dbReference>
<dbReference type="PANTHER" id="PTHR13693">
    <property type="entry name" value="CLASS II AMINOTRANSFERASE/8-AMINO-7-OXONONANOATE SYNTHASE"/>
    <property type="match status" value="1"/>
</dbReference>
<dbReference type="Pfam" id="PF00155">
    <property type="entry name" value="Aminotran_1_2"/>
    <property type="match status" value="1"/>
</dbReference>
<dbReference type="SUPFAM" id="SSF53383">
    <property type="entry name" value="PLP-dependent transferases"/>
    <property type="match status" value="1"/>
</dbReference>
<dbReference type="PROSITE" id="PS00599">
    <property type="entry name" value="AA_TRANSFER_CLASS_2"/>
    <property type="match status" value="1"/>
</dbReference>
<protein>
    <recommendedName>
        <fullName evidence="1">8-amino-7-oxononanoate synthase</fullName>
        <shortName evidence="1">AONS</shortName>
        <ecNumber evidence="1">2.3.1.47</ecNumber>
    </recommendedName>
    <alternativeName>
        <fullName evidence="1">7-keto-8-amino-pelargonic acid synthase</fullName>
        <shortName evidence="1">7-KAP synthase</shortName>
        <shortName evidence="1">KAPA synthase</shortName>
    </alternativeName>
    <alternativeName>
        <fullName evidence="1">8-amino-7-ketopelargonate synthase</fullName>
    </alternativeName>
</protein>
<reference key="1">
    <citation type="journal article" date="2011" name="J. Bacteriol.">
        <title>Comparative genomics of 28 Salmonella enterica isolates: evidence for CRISPR-mediated adaptive sublineage evolution.</title>
        <authorList>
            <person name="Fricke W.F."/>
            <person name="Mammel M.K."/>
            <person name="McDermott P.F."/>
            <person name="Tartera C."/>
            <person name="White D.G."/>
            <person name="Leclerc J.E."/>
            <person name="Ravel J."/>
            <person name="Cebula T.A."/>
        </authorList>
    </citation>
    <scope>NUCLEOTIDE SEQUENCE [LARGE SCALE GENOMIC DNA]</scope>
    <source>
        <strain>CVM19633</strain>
    </source>
</reference>
<feature type="chain" id="PRO_0000381104" description="8-amino-7-oxononanoate synthase">
    <location>
        <begin position="1"/>
        <end position="385"/>
    </location>
</feature>
<feature type="binding site" evidence="1">
    <location>
        <position position="21"/>
    </location>
    <ligand>
        <name>substrate</name>
    </ligand>
</feature>
<feature type="binding site" evidence="1">
    <location>
        <begin position="108"/>
        <end position="109"/>
    </location>
    <ligand>
        <name>pyridoxal 5'-phosphate</name>
        <dbReference type="ChEBI" id="CHEBI:597326"/>
    </ligand>
</feature>
<feature type="binding site" evidence="1">
    <location>
        <position position="133"/>
    </location>
    <ligand>
        <name>substrate</name>
    </ligand>
</feature>
<feature type="binding site" evidence="1">
    <location>
        <position position="179"/>
    </location>
    <ligand>
        <name>pyridoxal 5'-phosphate</name>
        <dbReference type="ChEBI" id="CHEBI:597326"/>
    </ligand>
</feature>
<feature type="binding site" evidence="1">
    <location>
        <position position="207"/>
    </location>
    <ligand>
        <name>pyridoxal 5'-phosphate</name>
        <dbReference type="ChEBI" id="CHEBI:597326"/>
    </ligand>
</feature>
<feature type="binding site" evidence="1">
    <location>
        <position position="233"/>
    </location>
    <ligand>
        <name>pyridoxal 5'-phosphate</name>
        <dbReference type="ChEBI" id="CHEBI:597326"/>
    </ligand>
</feature>
<feature type="binding site" evidence="1">
    <location>
        <position position="352"/>
    </location>
    <ligand>
        <name>substrate</name>
    </ligand>
</feature>
<feature type="modified residue" description="N6-(pyridoxal phosphate)lysine" evidence="1">
    <location>
        <position position="236"/>
    </location>
</feature>
<keyword id="KW-0093">Biotin biosynthesis</keyword>
<keyword id="KW-0663">Pyridoxal phosphate</keyword>
<keyword id="KW-0808">Transferase</keyword>